<name>YL759_MIMIV</name>
<gene>
    <name type="ordered locus">MIMI_L759</name>
</gene>
<feature type="chain" id="PRO_0000253293" description="Uncharacterized protein L759">
    <location>
        <begin position="1"/>
        <end position="216"/>
    </location>
</feature>
<dbReference type="EMBL" id="AY653733">
    <property type="protein sequence ID" value="AAV51019.1"/>
    <property type="molecule type" value="Genomic_DNA"/>
</dbReference>
<dbReference type="SMR" id="Q5UPP8"/>
<dbReference type="KEGG" id="vg:9925417"/>
<dbReference type="OrthoDB" id="14638at10239"/>
<dbReference type="Proteomes" id="UP000001134">
    <property type="component" value="Genome"/>
</dbReference>
<dbReference type="GO" id="GO:0003824">
    <property type="term" value="F:catalytic activity"/>
    <property type="evidence" value="ECO:0007669"/>
    <property type="project" value="InterPro"/>
</dbReference>
<dbReference type="InterPro" id="IPR011034">
    <property type="entry name" value="Formyl_transferase-like_C_sf"/>
</dbReference>
<dbReference type="SUPFAM" id="SSF50486">
    <property type="entry name" value="FMT C-terminal domain-like"/>
    <property type="match status" value="1"/>
</dbReference>
<reference key="1">
    <citation type="journal article" date="2004" name="Science">
        <title>The 1.2-megabase genome sequence of Mimivirus.</title>
        <authorList>
            <person name="Raoult D."/>
            <person name="Audic S."/>
            <person name="Robert C."/>
            <person name="Abergel C."/>
            <person name="Renesto P."/>
            <person name="Ogata H."/>
            <person name="La Scola B."/>
            <person name="Susan M."/>
            <person name="Claverie J.-M."/>
        </authorList>
    </citation>
    <scope>NUCLEOTIDE SEQUENCE [LARGE SCALE GENOMIC DNA]</scope>
    <source>
        <strain>Rowbotham-Bradford</strain>
    </source>
</reference>
<accession>Q5UPP8</accession>
<protein>
    <recommendedName>
        <fullName>Uncharacterized protein L759</fullName>
    </recommendedName>
</protein>
<organism>
    <name type="scientific">Acanthamoeba polyphaga mimivirus</name>
    <name type="common">APMV</name>
    <dbReference type="NCBI Taxonomy" id="212035"/>
    <lineage>
        <taxon>Viruses</taxon>
        <taxon>Varidnaviria</taxon>
        <taxon>Bamfordvirae</taxon>
        <taxon>Nucleocytoviricota</taxon>
        <taxon>Megaviricetes</taxon>
        <taxon>Imitervirales</taxon>
        <taxon>Mimiviridae</taxon>
        <taxon>Megamimivirinae</taxon>
        <taxon>Mimivirus</taxon>
        <taxon>Mimivirus bradfordmassiliense</taxon>
    </lineage>
</organism>
<organismHost>
    <name type="scientific">Acanthamoeba polyphaga</name>
    <name type="common">Amoeba</name>
    <dbReference type="NCBI Taxonomy" id="5757"/>
</organismHost>
<proteinExistence type="predicted"/>
<keyword id="KW-1185">Reference proteome</keyword>
<sequence>MVLLTEEDYSDLNEDYFNDLADTLFNKCYLVANGSKWRLVEIEFYLNNENHADPYVHCDPDQLLSHTFYFHRFKNRTYKSGTFKGMDITLGTYPNDPKFKPKKTDTKTYFGILIRSVQRIKTGEIIEGPCNTVNKLLEQYEFTKIDELTGGESLDLFENDQNFYLKFTKSLKSEKIYSGPRIGLSDKFMEWRDLPYRYVIFKSSIKKRKTTLKELN</sequence>